<comment type="function">
    <text evidence="1">Negative regulator of sigma-B activity. Phosphorylates and inactivates its specific antagonist protein, RsbV. Upon phosphorylation of RsbV, RsbW is released and binds to sigma-B, thereby blocking its ability to form an RNA polymerase holoenzyme (E-sigma-B).</text>
</comment>
<comment type="catalytic activity">
    <reaction evidence="1">
        <text>L-seryl-[protein] + ATP = O-phospho-L-seryl-[protein] + ADP + H(+)</text>
        <dbReference type="Rhea" id="RHEA:17989"/>
        <dbReference type="Rhea" id="RHEA-COMP:9863"/>
        <dbReference type="Rhea" id="RHEA-COMP:11604"/>
        <dbReference type="ChEBI" id="CHEBI:15378"/>
        <dbReference type="ChEBI" id="CHEBI:29999"/>
        <dbReference type="ChEBI" id="CHEBI:30616"/>
        <dbReference type="ChEBI" id="CHEBI:83421"/>
        <dbReference type="ChEBI" id="CHEBI:456216"/>
        <dbReference type="EC" id="2.7.11.1"/>
    </reaction>
</comment>
<comment type="catalytic activity">
    <reaction evidence="1">
        <text>L-threonyl-[protein] + ATP = O-phospho-L-threonyl-[protein] + ADP + H(+)</text>
        <dbReference type="Rhea" id="RHEA:46608"/>
        <dbReference type="Rhea" id="RHEA-COMP:11060"/>
        <dbReference type="Rhea" id="RHEA-COMP:11605"/>
        <dbReference type="ChEBI" id="CHEBI:15378"/>
        <dbReference type="ChEBI" id="CHEBI:30013"/>
        <dbReference type="ChEBI" id="CHEBI:30616"/>
        <dbReference type="ChEBI" id="CHEBI:61977"/>
        <dbReference type="ChEBI" id="CHEBI:456216"/>
        <dbReference type="EC" id="2.7.11.1"/>
    </reaction>
</comment>
<comment type="similarity">
    <text evidence="1">Belongs to the anti-sigma-factor family.</text>
</comment>
<feature type="chain" id="PRO_1000147385" description="Serine-protein kinase RsbW">
    <location>
        <begin position="1"/>
        <end position="160"/>
    </location>
</feature>
<proteinExistence type="inferred from homology"/>
<gene>
    <name evidence="1" type="primary">rsbW</name>
    <name type="ordered locus">BAMEG_3580</name>
</gene>
<evidence type="ECO:0000255" key="1">
    <source>
        <dbReference type="HAMAP-Rule" id="MF_00638"/>
    </source>
</evidence>
<sequence>MMERFEKIEMKIPAKAEYVAIIRLTMAGVANRMGFAYDDIEDMKIAISEACTNIVQHAYKEDVGEIAIVFGLYENRLEIMVADNGVSFDFNNLRSKVGPYDISKPVEHLPENGLGLYLINTLMDDIQIMHDEGMTVLMTKYIQREQVENDGNPISTYESY</sequence>
<protein>
    <recommendedName>
        <fullName evidence="1">Serine-protein kinase RsbW</fullName>
        <ecNumber evidence="1">2.7.11.1</ecNumber>
    </recommendedName>
    <alternativeName>
        <fullName evidence="1">Anti-sigma-B factor</fullName>
    </alternativeName>
    <alternativeName>
        <fullName evidence="1">Sigma-B negative effector RsbW</fullName>
    </alternativeName>
</protein>
<keyword id="KW-0067">ATP-binding</keyword>
<keyword id="KW-0418">Kinase</keyword>
<keyword id="KW-0547">Nucleotide-binding</keyword>
<keyword id="KW-0723">Serine/threonine-protein kinase</keyword>
<keyword id="KW-0808">Transferase</keyword>
<dbReference type="EC" id="2.7.11.1" evidence="1"/>
<dbReference type="EMBL" id="CP001215">
    <property type="protein sequence ID" value="ACP15529.1"/>
    <property type="molecule type" value="Genomic_DNA"/>
</dbReference>
<dbReference type="RefSeq" id="WP_000970578.1">
    <property type="nucleotide sequence ID" value="NC_012581.1"/>
</dbReference>
<dbReference type="SMR" id="C3LD19"/>
<dbReference type="GeneID" id="45021033"/>
<dbReference type="KEGG" id="bah:BAMEG_3580"/>
<dbReference type="HOGENOM" id="CLU_090336_11_1_9"/>
<dbReference type="GO" id="GO:0005524">
    <property type="term" value="F:ATP binding"/>
    <property type="evidence" value="ECO:0007669"/>
    <property type="project" value="UniProtKB-KW"/>
</dbReference>
<dbReference type="GO" id="GO:0106310">
    <property type="term" value="F:protein serine kinase activity"/>
    <property type="evidence" value="ECO:0007669"/>
    <property type="project" value="RHEA"/>
</dbReference>
<dbReference type="GO" id="GO:0004674">
    <property type="term" value="F:protein serine/threonine kinase activity"/>
    <property type="evidence" value="ECO:0007669"/>
    <property type="project" value="UniProtKB-KW"/>
</dbReference>
<dbReference type="GO" id="GO:0016989">
    <property type="term" value="F:sigma factor antagonist activity"/>
    <property type="evidence" value="ECO:0007669"/>
    <property type="project" value="InterPro"/>
</dbReference>
<dbReference type="CDD" id="cd16936">
    <property type="entry name" value="HATPase_RsbW-like"/>
    <property type="match status" value="1"/>
</dbReference>
<dbReference type="FunFam" id="3.30.565.10:FF:000026">
    <property type="entry name" value="Serine-protein kinase RsbW"/>
    <property type="match status" value="1"/>
</dbReference>
<dbReference type="Gene3D" id="3.30.565.10">
    <property type="entry name" value="Histidine kinase-like ATPase, C-terminal domain"/>
    <property type="match status" value="1"/>
</dbReference>
<dbReference type="HAMAP" id="MF_00638">
    <property type="entry name" value="Anti_sigma_B"/>
    <property type="match status" value="1"/>
</dbReference>
<dbReference type="InterPro" id="IPR050267">
    <property type="entry name" value="Anti-sigma-factor_SerPK"/>
</dbReference>
<dbReference type="InterPro" id="IPR036890">
    <property type="entry name" value="HATPase_C_sf"/>
</dbReference>
<dbReference type="InterPro" id="IPR010193">
    <property type="entry name" value="RsbW"/>
</dbReference>
<dbReference type="NCBIfam" id="NF003144">
    <property type="entry name" value="PRK04069.1"/>
    <property type="match status" value="1"/>
</dbReference>
<dbReference type="NCBIfam" id="TIGR01924">
    <property type="entry name" value="rsbW_low_gc"/>
    <property type="match status" value="1"/>
</dbReference>
<dbReference type="PANTHER" id="PTHR35526">
    <property type="entry name" value="ANTI-SIGMA-F FACTOR RSBW-RELATED"/>
    <property type="match status" value="1"/>
</dbReference>
<dbReference type="PANTHER" id="PTHR35526:SF9">
    <property type="entry name" value="SERINE-PROTEIN KINASE RSBW"/>
    <property type="match status" value="1"/>
</dbReference>
<dbReference type="Pfam" id="PF13581">
    <property type="entry name" value="HATPase_c_2"/>
    <property type="match status" value="1"/>
</dbReference>
<dbReference type="SUPFAM" id="SSF55874">
    <property type="entry name" value="ATPase domain of HSP90 chaperone/DNA topoisomerase II/histidine kinase"/>
    <property type="match status" value="1"/>
</dbReference>
<name>RSBW_BACAC</name>
<accession>C3LD19</accession>
<organism>
    <name type="scientific">Bacillus anthracis (strain CDC 684 / NRRL 3495)</name>
    <dbReference type="NCBI Taxonomy" id="568206"/>
    <lineage>
        <taxon>Bacteria</taxon>
        <taxon>Bacillati</taxon>
        <taxon>Bacillota</taxon>
        <taxon>Bacilli</taxon>
        <taxon>Bacillales</taxon>
        <taxon>Bacillaceae</taxon>
        <taxon>Bacillus</taxon>
        <taxon>Bacillus cereus group</taxon>
    </lineage>
</organism>
<reference key="1">
    <citation type="submission" date="2008-10" db="EMBL/GenBank/DDBJ databases">
        <title>Genome sequence of Bacillus anthracis str. CDC 684.</title>
        <authorList>
            <person name="Dodson R.J."/>
            <person name="Munk A.C."/>
            <person name="Brettin T."/>
            <person name="Bruce D."/>
            <person name="Detter C."/>
            <person name="Tapia R."/>
            <person name="Han C."/>
            <person name="Sutton G."/>
            <person name="Sims D."/>
        </authorList>
    </citation>
    <scope>NUCLEOTIDE SEQUENCE [LARGE SCALE GENOMIC DNA]</scope>
    <source>
        <strain>CDC 684 / NRRL 3495</strain>
    </source>
</reference>